<protein>
    <recommendedName>
        <fullName>Probable tyrosine phosphatase protein J4</fullName>
        <shortName>PTP-J4</shortName>
        <ecNumber>3.1.3.48</ecNumber>
    </recommendedName>
</protein>
<keyword id="KW-0378">Hydrolase</keyword>
<keyword id="KW-0904">Protein phosphatase</keyword>
<keyword id="KW-1185">Reference proteome</keyword>
<comment type="catalytic activity">
    <reaction>
        <text>O-phospho-L-tyrosyl-[protein] + H2O = L-tyrosyl-[protein] + phosphate</text>
        <dbReference type="Rhea" id="RHEA:10684"/>
        <dbReference type="Rhea" id="RHEA-COMP:10136"/>
        <dbReference type="Rhea" id="RHEA-COMP:20101"/>
        <dbReference type="ChEBI" id="CHEBI:15377"/>
        <dbReference type="ChEBI" id="CHEBI:43474"/>
        <dbReference type="ChEBI" id="CHEBI:46858"/>
        <dbReference type="ChEBI" id="CHEBI:61978"/>
        <dbReference type="EC" id="3.1.3.48"/>
    </reaction>
</comment>
<comment type="similarity">
    <text evidence="2">Belongs to the protein-tyrosine phosphatase family.</text>
</comment>
<gene>
    <name type="primary">J5</name>
</gene>
<name>PTPJ4_MDBVW</name>
<dbReference type="EC" id="3.1.3.48"/>
<dbReference type="EMBL" id="AY875686">
    <property type="protein sequence ID" value="AAW51794.1"/>
    <property type="molecule type" value="Genomic_DNA"/>
</dbReference>
<dbReference type="RefSeq" id="YP_239391.1">
    <property type="nucleotide sequence ID" value="NC_007036.1"/>
</dbReference>
<dbReference type="SMR" id="Q5I137"/>
<dbReference type="KEGG" id="vg:5075824"/>
<dbReference type="Proteomes" id="UP000008168">
    <property type="component" value="Genome"/>
</dbReference>
<dbReference type="GO" id="GO:0004725">
    <property type="term" value="F:protein tyrosine phosphatase activity"/>
    <property type="evidence" value="ECO:0007669"/>
    <property type="project" value="UniProtKB-EC"/>
</dbReference>
<dbReference type="CDD" id="cd00047">
    <property type="entry name" value="PTPc"/>
    <property type="match status" value="1"/>
</dbReference>
<dbReference type="Gene3D" id="3.90.190.10">
    <property type="entry name" value="Protein tyrosine phosphatase superfamily"/>
    <property type="match status" value="1"/>
</dbReference>
<dbReference type="InterPro" id="IPR029021">
    <property type="entry name" value="Prot-tyrosine_phosphatase-like"/>
</dbReference>
<dbReference type="InterPro" id="IPR050348">
    <property type="entry name" value="Protein-Tyr_Phosphatase"/>
</dbReference>
<dbReference type="InterPro" id="IPR000242">
    <property type="entry name" value="PTP_cat"/>
</dbReference>
<dbReference type="InterPro" id="IPR003595">
    <property type="entry name" value="Tyr_Pase_cat"/>
</dbReference>
<dbReference type="InterPro" id="IPR000387">
    <property type="entry name" value="Tyr_Pase_dom"/>
</dbReference>
<dbReference type="PANTHER" id="PTHR19134:SF534">
    <property type="entry name" value="LD27988P"/>
    <property type="match status" value="1"/>
</dbReference>
<dbReference type="PANTHER" id="PTHR19134">
    <property type="entry name" value="RECEPTOR-TYPE TYROSINE-PROTEIN PHOSPHATASE"/>
    <property type="match status" value="1"/>
</dbReference>
<dbReference type="Pfam" id="PF00102">
    <property type="entry name" value="Y_phosphatase"/>
    <property type="match status" value="1"/>
</dbReference>
<dbReference type="PRINTS" id="PR00700">
    <property type="entry name" value="PRTYPHPHTASE"/>
</dbReference>
<dbReference type="SMART" id="SM00194">
    <property type="entry name" value="PTPc"/>
    <property type="match status" value="1"/>
</dbReference>
<dbReference type="SMART" id="SM00404">
    <property type="entry name" value="PTPc_motif"/>
    <property type="match status" value="1"/>
</dbReference>
<dbReference type="SUPFAM" id="SSF52799">
    <property type="entry name" value="(Phosphotyrosine protein) phosphatases II"/>
    <property type="match status" value="1"/>
</dbReference>
<dbReference type="PROSITE" id="PS50056">
    <property type="entry name" value="TYR_PHOSPHATASE_2"/>
    <property type="match status" value="1"/>
</dbReference>
<dbReference type="PROSITE" id="PS50055">
    <property type="entry name" value="TYR_PHOSPHATASE_PTP"/>
    <property type="match status" value="1"/>
</dbReference>
<proteinExistence type="inferred from homology"/>
<evidence type="ECO:0000255" key="1">
    <source>
        <dbReference type="PROSITE-ProRule" id="PRU00160"/>
    </source>
</evidence>
<evidence type="ECO:0000305" key="2"/>
<accession>Q5I137</accession>
<organism>
    <name type="scientific">Microplitis demolitor bracovirus (isolate Webb)</name>
    <name type="common">MdBV</name>
    <dbReference type="NCBI Taxonomy" id="654919"/>
    <lineage>
        <taxon>Viruses</taxon>
        <taxon>Viruses incertae sedis</taxon>
        <taxon>Polydnaviriformidae</taxon>
        <taxon>Bracoviriform</taxon>
        <taxon>Microplitis demolitor bracovirus</taxon>
    </lineage>
</organism>
<reference key="1">
    <citation type="journal article" date="2006" name="Virology">
        <title>Polydnavirus genomes reflect their dual roles as mutualists and pathogens.</title>
        <authorList>
            <person name="Webb B.A."/>
            <person name="Strand M.R."/>
            <person name="Dickey S.E."/>
            <person name="Beck M.H."/>
            <person name="Hilgarth R.S."/>
            <person name="Barney W.E."/>
            <person name="Kadash K."/>
            <person name="Kroemer J.A."/>
            <person name="Lindstrom K.G."/>
            <person name="Rattanadechakul W."/>
            <person name="Shelby K.S."/>
            <person name="Thoetkiattikul H."/>
            <person name="Turnbull M.W."/>
            <person name="Witherell R.A."/>
        </authorList>
    </citation>
    <scope>NUCLEOTIDE SEQUENCE [GENOMIC DNA]</scope>
</reference>
<feature type="chain" id="PRO_0000405358" description="Probable tyrosine phosphatase protein J4">
    <location>
        <begin position="1"/>
        <end position="299"/>
    </location>
</feature>
<feature type="domain" description="Tyrosine-protein phosphatase" evidence="1">
    <location>
        <begin position="16"/>
        <end position="289"/>
    </location>
</feature>
<feature type="active site" description="Phosphocysteine intermediate" evidence="1">
    <location>
        <position position="230"/>
    </location>
</feature>
<organismHost>
    <name type="scientific">Microplitis demolitor</name>
    <name type="common">Parasitoid wasp</name>
    <dbReference type="NCBI Taxonomy" id="69319"/>
</organismHost>
<sequence>MDNKSQRRNNENQKKVEALDFLSFMRRPNCIAEILRQHTQIIEESNNYYYLKMKTKDNKSQGPLRSLLCLPKNVNQKTDSAFCSVDGYNVKNKFLCTRSPNQDSLYQFWSMAYKKNIHIIVMLSPIDNLMRHRYWSLEEDEVFECREFRIETLQVDVQAFYITTTLQLKHENGAVRKIVHFNYTGWPVDNISHHPKEFISFILTVNSARDEVDKLSARNSHTLGPIMVHCSDGFNNSCVYCLLDICISEFGATSNVSVPNTFSKIRQQNRHAISQPENYVYCYQALYVWISSISNSLHH</sequence>